<evidence type="ECO:0000250" key="1">
    <source>
        <dbReference type="UniProtKB" id="Q8R5H1"/>
    </source>
</evidence>
<evidence type="ECO:0000255" key="2">
    <source>
        <dbReference type="PROSITE-ProRule" id="PRU00613"/>
    </source>
</evidence>
<evidence type="ECO:0000255" key="3">
    <source>
        <dbReference type="PROSITE-ProRule" id="PRU01035"/>
    </source>
</evidence>
<evidence type="ECO:0000255" key="4">
    <source>
        <dbReference type="PROSITE-ProRule" id="PRU10092"/>
    </source>
</evidence>
<evidence type="ECO:0000255" key="5">
    <source>
        <dbReference type="PROSITE-ProRule" id="PRU10093"/>
    </source>
</evidence>
<evidence type="ECO:0000256" key="6">
    <source>
        <dbReference type="SAM" id="MobiDB-lite"/>
    </source>
</evidence>
<evidence type="ECO:0000269" key="7">
    <source>
    </source>
</evidence>
<evidence type="ECO:0000269" key="8">
    <source>
    </source>
</evidence>
<evidence type="ECO:0000269" key="9">
    <source>
    </source>
</evidence>
<evidence type="ECO:0000269" key="10">
    <source>
    </source>
</evidence>
<evidence type="ECO:0000269" key="11">
    <source>
    </source>
</evidence>
<evidence type="ECO:0000269" key="12">
    <source>
    </source>
</evidence>
<evidence type="ECO:0000269" key="13">
    <source>
    </source>
</evidence>
<evidence type="ECO:0000269" key="14">
    <source>
    </source>
</evidence>
<evidence type="ECO:0000269" key="15">
    <source>
    </source>
</evidence>
<evidence type="ECO:0000269" key="16">
    <source>
    </source>
</evidence>
<evidence type="ECO:0000269" key="17">
    <source>
    </source>
</evidence>
<evidence type="ECO:0000269" key="18">
    <source>
    </source>
</evidence>
<evidence type="ECO:0000269" key="19">
    <source>
    </source>
</evidence>
<evidence type="ECO:0000269" key="20">
    <source>
    </source>
</evidence>
<evidence type="ECO:0000269" key="21">
    <source ref="8"/>
</evidence>
<evidence type="ECO:0000303" key="22">
    <source>
    </source>
</evidence>
<evidence type="ECO:0000303" key="23">
    <source>
    </source>
</evidence>
<evidence type="ECO:0000303" key="24">
    <source>
    </source>
</evidence>
<evidence type="ECO:0000303" key="25">
    <source>
    </source>
</evidence>
<evidence type="ECO:0000303" key="26">
    <source ref="1"/>
</evidence>
<evidence type="ECO:0000303" key="27">
    <source ref="9"/>
</evidence>
<evidence type="ECO:0000305" key="28"/>
<evidence type="ECO:0000305" key="29">
    <source>
    </source>
</evidence>
<evidence type="ECO:0000305" key="30">
    <source>
    </source>
</evidence>
<evidence type="ECO:0000305" key="31">
    <source>
    </source>
</evidence>
<evidence type="ECO:0000305" key="32">
    <source>
    </source>
</evidence>
<evidence type="ECO:0000305" key="33">
    <source>
    </source>
</evidence>
<evidence type="ECO:0000305" key="34">
    <source>
    </source>
</evidence>
<evidence type="ECO:0000312" key="35">
    <source>
        <dbReference type="HGNC" id="HGNC:12613"/>
    </source>
</evidence>
<evidence type="ECO:0007744" key="36">
    <source>
    </source>
</evidence>
<evidence type="ECO:0007744" key="37">
    <source>
    </source>
</evidence>
<evidence type="ECO:0007744" key="38">
    <source>
    </source>
</evidence>
<evidence type="ECO:0007744" key="39">
    <source>
    </source>
</evidence>
<evidence type="ECO:0007744" key="40">
    <source>
    </source>
</evidence>
<evidence type="ECO:0007744" key="41">
    <source>
    </source>
</evidence>
<evidence type="ECO:0007744" key="42">
    <source>
    </source>
</evidence>
<evidence type="ECO:0007744" key="43">
    <source>
    </source>
</evidence>
<evidence type="ECO:0007744" key="44">
    <source>
    </source>
</evidence>
<evidence type="ECO:0007829" key="45">
    <source>
        <dbReference type="PDB" id="1W6V"/>
    </source>
</evidence>
<evidence type="ECO:0007829" key="46">
    <source>
        <dbReference type="PDB" id="3T9L"/>
    </source>
</evidence>
<evidence type="ECO:0007829" key="47">
    <source>
        <dbReference type="PDB" id="4A3O"/>
    </source>
</evidence>
<evidence type="ECO:0007829" key="48">
    <source>
        <dbReference type="PDB" id="4A3P"/>
    </source>
</evidence>
<evidence type="ECO:0007829" key="49">
    <source>
        <dbReference type="PDB" id="5JJW"/>
    </source>
</evidence>
<evidence type="ECO:0007829" key="50">
    <source>
        <dbReference type="PDB" id="6CRN"/>
    </source>
</evidence>
<evidence type="ECO:0007829" key="51">
    <source>
        <dbReference type="PDB" id="6GHA"/>
    </source>
</evidence>
<evidence type="ECO:0007829" key="52">
    <source>
        <dbReference type="PDB" id="6ML1"/>
    </source>
</evidence>
<evidence type="ECO:0007829" key="53">
    <source>
        <dbReference type="PDB" id="7R2G"/>
    </source>
</evidence>
<organism>
    <name type="scientific">Homo sapiens</name>
    <name type="common">Human</name>
    <dbReference type="NCBI Taxonomy" id="9606"/>
    <lineage>
        <taxon>Eukaryota</taxon>
        <taxon>Metazoa</taxon>
        <taxon>Chordata</taxon>
        <taxon>Craniata</taxon>
        <taxon>Vertebrata</taxon>
        <taxon>Euteleostomi</taxon>
        <taxon>Mammalia</taxon>
        <taxon>Eutheria</taxon>
        <taxon>Euarchontoglires</taxon>
        <taxon>Primates</taxon>
        <taxon>Haplorrhini</taxon>
        <taxon>Catarrhini</taxon>
        <taxon>Hominidae</taxon>
        <taxon>Homo</taxon>
    </lineage>
</organism>
<sequence>MAEGGAADLDTQRSDIATLLKTSLRKGDTWYLVDSRWFKQWKKYVGFDSWDKYQMGDQNVYPGPIDNSGLLKDGDAQSLKEHLIDELDYILLPTEGWNKLVSWYTLMEGQEPIARKVVEQGMFVKHCKVEVYLTELKLCENGNMNNVVTRRFSKADTIDTIEKEIRKIFSIPDEKETRLWNKYMSNTFEPLNKPDSTIQDAGLYQGQVLVIEQKNEDGTWPRGPSTPKSPGASNFSTLPKISPSSLSNNYNNMNNRNVKNSNYCLPSYTAYKNYDYSEPGRNNEQPGLCGLSNLGNTCFMNSAIQCLSNTPPLTEYFLNDKYQEELNFDNPLGMRGEIAKSYAELIKQMWSGKFSYVTPRAFKTQVGRFAPQFSGYQQQDCQELLAFLLDGLHEDLNRIRKKPYIQLKDADGRPDKVVAEEAWENHLKRNDSIIVDIFHGLFKSTLVCPECAKISVTFDPFCYLTLPLPMKKERTLEVYLVRMDPLTKPMQYKVVVPKIGNILDLCTALSALSGIPADKMIVTDIYNHRFHRIFAMDENLSSIMERDDIYVFEININRTEDTEHVIIPVCLREKFRHSSYTHHTGSSLFGQPFLMAVPRNNTEDKLYNLLLLRMCRYVKISTETEETEGSLHCCKDQNINGNGPNGIHEEGSPSEMETDEPDDESSQDQELPSENENSQSEDSVGGDNDSENGLCTEDTCKGQLTGHKKRLFTFQFNNLGNTDINYIKDDTRHIRFDDRQLRLDERSFLALDWDPDLKKRYFDENAAEDFEKHESVEYKPPKKPFVKLKDCIELFTTKEKLGAEDPWYCPNCKEHQQATKKLDLWSLPPVLVVHLKRFSYSRYMRDKLDTLVDFPINDLDMSEFLINPNAGPCRYNLIAVSNHYGGMGGGHYTAFAKNKDDGKWYYFDDSSVSTASEDQIVSKAAYVLFYQRQDTFSGTGFFPLDRETKGASAATGIPLESDEDSNDNDNDIENENCMHTN</sequence>
<keyword id="KW-0002">3D-structure</keyword>
<keyword id="KW-0007">Acetylation</keyword>
<keyword id="KW-0025">Alternative splicing</keyword>
<keyword id="KW-0963">Cytoplasm</keyword>
<keyword id="KW-0903">Direct protein sequencing</keyword>
<keyword id="KW-0945">Host-virus interaction</keyword>
<keyword id="KW-0378">Hydrolase</keyword>
<keyword id="KW-0496">Mitochondrion</keyword>
<keyword id="KW-0539">Nucleus</keyword>
<keyword id="KW-0597">Phosphoprotein</keyword>
<keyword id="KW-0645">Protease</keyword>
<keyword id="KW-1267">Proteomics identification</keyword>
<keyword id="KW-1185">Reference proteome</keyword>
<keyword id="KW-0788">Thiol protease</keyword>
<keyword id="KW-0832">Ubl conjugation</keyword>
<keyword id="KW-0833">Ubl conjugation pathway</keyword>
<dbReference type="EC" id="3.4.19.12" evidence="7 8 14 16 18 19 20"/>
<dbReference type="EMBL" id="AF106069">
    <property type="protein sequence ID" value="AAD52099.1"/>
    <property type="molecule type" value="mRNA"/>
</dbReference>
<dbReference type="EMBL" id="AB011101">
    <property type="protein sequence ID" value="BAA25455.2"/>
    <property type="molecule type" value="mRNA"/>
</dbReference>
<dbReference type="EMBL" id="AF153604">
    <property type="protein sequence ID" value="AAD41086.1"/>
    <property type="molecule type" value="mRNA"/>
</dbReference>
<dbReference type="EMBL" id="AK023703">
    <property type="protein sequence ID" value="BAB14648.1"/>
    <property type="molecule type" value="mRNA"/>
</dbReference>
<dbReference type="EMBL" id="AK292337">
    <property type="protein sequence ID" value="BAF85026.1"/>
    <property type="molecule type" value="mRNA"/>
</dbReference>
<dbReference type="EMBL" id="AC048342">
    <property type="status" value="NOT_ANNOTATED_CDS"/>
    <property type="molecule type" value="Genomic_DNA"/>
</dbReference>
<dbReference type="EMBL" id="AC079035">
    <property type="status" value="NOT_ANNOTATED_CDS"/>
    <property type="molecule type" value="Genomic_DNA"/>
</dbReference>
<dbReference type="EMBL" id="AC117370">
    <property type="status" value="NOT_ANNOTATED_CDS"/>
    <property type="molecule type" value="Genomic_DNA"/>
</dbReference>
<dbReference type="EMBL" id="BC020688">
    <property type="protein sequence ID" value="AAH20688.1"/>
    <property type="molecule type" value="mRNA"/>
</dbReference>
<dbReference type="EMBL" id="BC063454">
    <property type="protein sequence ID" value="AAH63454.1"/>
    <property type="molecule type" value="mRNA"/>
</dbReference>
<dbReference type="EMBL" id="BC125123">
    <property type="protein sequence ID" value="AAI25124.1"/>
    <property type="molecule type" value="mRNA"/>
</dbReference>
<dbReference type="EMBL" id="AF013990">
    <property type="protein sequence ID" value="AAG28973.1"/>
    <property type="molecule type" value="mRNA"/>
</dbReference>
<dbReference type="CCDS" id="CCDS58250.1">
    <molecule id="Q9Y4E8-4"/>
</dbReference>
<dbReference type="CCDS" id="CCDS58251.1">
    <molecule id="Q9Y4E8-1"/>
</dbReference>
<dbReference type="CCDS" id="CCDS8963.1">
    <molecule id="Q9Y4E8-2"/>
</dbReference>
<dbReference type="RefSeq" id="NP_001239007.1">
    <molecule id="Q9Y4E8-1"/>
    <property type="nucleotide sequence ID" value="NM_001252078.2"/>
</dbReference>
<dbReference type="RefSeq" id="NP_001239008.1">
    <molecule id="Q9Y4E8-4"/>
    <property type="nucleotide sequence ID" value="NM_001252079.2"/>
</dbReference>
<dbReference type="RefSeq" id="NP_006304.1">
    <molecule id="Q9Y4E8-2"/>
    <property type="nucleotide sequence ID" value="NM_006313.3"/>
</dbReference>
<dbReference type="PDB" id="1W6V">
    <property type="method" value="NMR"/>
    <property type="chains" value="A=1-120"/>
</dbReference>
<dbReference type="PDB" id="3LMN">
    <property type="method" value="X-ray"/>
    <property type="resolution" value="2.15 A"/>
    <property type="chains" value="A/B=1-133"/>
</dbReference>
<dbReference type="PDB" id="3PPA">
    <property type="method" value="X-ray"/>
    <property type="resolution" value="2.35 A"/>
    <property type="chains" value="A=6-223"/>
</dbReference>
<dbReference type="PDB" id="3PV1">
    <property type="method" value="X-ray"/>
    <property type="resolution" value="2.60 A"/>
    <property type="chains" value="A/B=1-223"/>
</dbReference>
<dbReference type="PDB" id="3T9L">
    <property type="method" value="X-ray"/>
    <property type="resolution" value="1.50 A"/>
    <property type="chains" value="A=1-222"/>
</dbReference>
<dbReference type="PDB" id="4A3O">
    <property type="method" value="X-ray"/>
    <property type="resolution" value="2.20 A"/>
    <property type="chains" value="A/B=4-223"/>
</dbReference>
<dbReference type="PDB" id="4A3P">
    <property type="method" value="X-ray"/>
    <property type="resolution" value="1.40 A"/>
    <property type="chains" value="A=6-223"/>
</dbReference>
<dbReference type="PDB" id="5JJW">
    <property type="method" value="X-ray"/>
    <property type="resolution" value="3.01 A"/>
    <property type="chains" value="B=1-223"/>
</dbReference>
<dbReference type="PDB" id="6CPM">
    <property type="method" value="X-ray"/>
    <property type="resolution" value="2.01 A"/>
    <property type="chains" value="C/D=275-862, C/D=873-934"/>
</dbReference>
<dbReference type="PDB" id="6CRN">
    <property type="method" value="X-ray"/>
    <property type="resolution" value="2.50 A"/>
    <property type="chains" value="A/B/C/D=275-934"/>
</dbReference>
<dbReference type="PDB" id="6DJ9">
    <property type="method" value="X-ray"/>
    <property type="resolution" value="3.10 A"/>
    <property type="chains" value="A/B/C/D/E/F=1-134"/>
</dbReference>
<dbReference type="PDB" id="6GH9">
    <property type="method" value="X-ray"/>
    <property type="resolution" value="2.09 A"/>
    <property type="chains" value="A/B=284-468, A/B=786-951"/>
</dbReference>
<dbReference type="PDB" id="6GHA">
    <property type="method" value="X-ray"/>
    <property type="resolution" value="1.98 A"/>
    <property type="chains" value="A=284-468, A=786-948"/>
</dbReference>
<dbReference type="PDB" id="6ML1">
    <property type="method" value="X-ray"/>
    <property type="resolution" value="1.90 A"/>
    <property type="chains" value="A/B=275-862, A/B=873-934"/>
</dbReference>
<dbReference type="PDB" id="7R2G">
    <property type="method" value="X-ray"/>
    <property type="resolution" value="1.98 A"/>
    <property type="chains" value="A/B=284-948"/>
</dbReference>
<dbReference type="PDBsum" id="1W6V"/>
<dbReference type="PDBsum" id="3LMN"/>
<dbReference type="PDBsum" id="3PPA"/>
<dbReference type="PDBsum" id="3PV1"/>
<dbReference type="PDBsum" id="3T9L"/>
<dbReference type="PDBsum" id="4A3O"/>
<dbReference type="PDBsum" id="4A3P"/>
<dbReference type="PDBsum" id="5JJW"/>
<dbReference type="PDBsum" id="6CPM"/>
<dbReference type="PDBsum" id="6CRN"/>
<dbReference type="PDBsum" id="6DJ9"/>
<dbReference type="PDBsum" id="6GH9"/>
<dbReference type="PDBsum" id="6GHA"/>
<dbReference type="PDBsum" id="6ML1"/>
<dbReference type="PDBsum" id="7R2G"/>
<dbReference type="BMRB" id="Q9Y4E8"/>
<dbReference type="SMR" id="Q9Y4E8"/>
<dbReference type="BioGRID" id="115283">
    <property type="interactions" value="498"/>
</dbReference>
<dbReference type="DIP" id="DIP-50239N"/>
<dbReference type="FunCoup" id="Q9Y4E8">
    <property type="interactions" value="4035"/>
</dbReference>
<dbReference type="IntAct" id="Q9Y4E8">
    <property type="interactions" value="116"/>
</dbReference>
<dbReference type="MINT" id="Q9Y4E8"/>
<dbReference type="STRING" id="9606.ENSP00000280377"/>
<dbReference type="BindingDB" id="Q9Y4E8"/>
<dbReference type="ChEMBL" id="CHEMBL4523508"/>
<dbReference type="MEROPS" id="C19.022"/>
<dbReference type="GlyGen" id="Q9Y4E8">
    <property type="glycosylation" value="2 sites, 1 O-linked glycan (1 site)"/>
</dbReference>
<dbReference type="iPTMnet" id="Q9Y4E8"/>
<dbReference type="MetOSite" id="Q9Y4E8"/>
<dbReference type="PhosphoSitePlus" id="Q9Y4E8"/>
<dbReference type="SwissPalm" id="Q9Y4E8"/>
<dbReference type="BioMuta" id="USP15"/>
<dbReference type="DMDM" id="28381406"/>
<dbReference type="jPOST" id="Q9Y4E8"/>
<dbReference type="MassIVE" id="Q9Y4E8"/>
<dbReference type="PaxDb" id="9606-ENSP00000280377"/>
<dbReference type="PeptideAtlas" id="Q9Y4E8"/>
<dbReference type="ProteomicsDB" id="81207"/>
<dbReference type="ProteomicsDB" id="86183">
    <molecule id="Q9Y4E8-1"/>
</dbReference>
<dbReference type="ProteomicsDB" id="86184">
    <molecule id="Q9Y4E8-2"/>
</dbReference>
<dbReference type="ProteomicsDB" id="86185">
    <molecule id="Q9Y4E8-3"/>
</dbReference>
<dbReference type="Pumba" id="Q9Y4E8"/>
<dbReference type="Antibodypedia" id="1729">
    <property type="antibodies" value="334 antibodies from 37 providers"/>
</dbReference>
<dbReference type="DNASU" id="9958"/>
<dbReference type="Ensembl" id="ENST00000280377.10">
    <molecule id="Q9Y4E8-1"/>
    <property type="protein sequence ID" value="ENSP00000280377.5"/>
    <property type="gene ID" value="ENSG00000135655.16"/>
</dbReference>
<dbReference type="Ensembl" id="ENST00000312635.10">
    <molecule id="Q9Y4E8-4"/>
    <property type="protein sequence ID" value="ENSP00000309240.6"/>
    <property type="gene ID" value="ENSG00000135655.16"/>
</dbReference>
<dbReference type="Ensembl" id="ENST00000353364.7">
    <molecule id="Q9Y4E8-2"/>
    <property type="protein sequence ID" value="ENSP00000258123.4"/>
    <property type="gene ID" value="ENSG00000135655.16"/>
</dbReference>
<dbReference type="GeneID" id="9958"/>
<dbReference type="KEGG" id="hsa:9958"/>
<dbReference type="MANE-Select" id="ENST00000280377.10">
    <property type="protein sequence ID" value="ENSP00000280377.5"/>
    <property type="RefSeq nucleotide sequence ID" value="NM_001252078.2"/>
    <property type="RefSeq protein sequence ID" value="NP_001239007.1"/>
</dbReference>
<dbReference type="UCSC" id="uc001sra.4">
    <molecule id="Q9Y4E8-1"/>
    <property type="organism name" value="human"/>
</dbReference>
<dbReference type="AGR" id="HGNC:12613"/>
<dbReference type="CTD" id="9958"/>
<dbReference type="DisGeNET" id="9958"/>
<dbReference type="GeneCards" id="USP15"/>
<dbReference type="HGNC" id="HGNC:12613">
    <property type="gene designation" value="USP15"/>
</dbReference>
<dbReference type="HPA" id="ENSG00000135655">
    <property type="expression patterns" value="Tissue enhanced (bone)"/>
</dbReference>
<dbReference type="MIM" id="604731">
    <property type="type" value="gene"/>
</dbReference>
<dbReference type="neXtProt" id="NX_Q9Y4E8"/>
<dbReference type="OpenTargets" id="ENSG00000135655"/>
<dbReference type="PharmGKB" id="PA37239"/>
<dbReference type="VEuPathDB" id="HostDB:ENSG00000135655"/>
<dbReference type="eggNOG" id="KOG1870">
    <property type="taxonomic scope" value="Eukaryota"/>
</dbReference>
<dbReference type="GeneTree" id="ENSGT00940000154932"/>
<dbReference type="HOGENOM" id="CLU_001060_7_1_1"/>
<dbReference type="InParanoid" id="Q9Y4E8"/>
<dbReference type="OMA" id="PCHAQQS"/>
<dbReference type="OrthoDB" id="265776at2759"/>
<dbReference type="PAN-GO" id="Q9Y4E8">
    <property type="GO annotations" value="1 GO annotation based on evolutionary models"/>
</dbReference>
<dbReference type="PhylomeDB" id="Q9Y4E8"/>
<dbReference type="TreeFam" id="TF106276"/>
<dbReference type="PathwayCommons" id="Q9Y4E8"/>
<dbReference type="Reactome" id="R-HSA-2173788">
    <property type="pathway name" value="Downregulation of TGF-beta receptor signaling"/>
</dbReference>
<dbReference type="Reactome" id="R-HSA-5689603">
    <property type="pathway name" value="UCH proteinases"/>
</dbReference>
<dbReference type="Reactome" id="R-HSA-5689880">
    <property type="pathway name" value="Ub-specific processing proteases"/>
</dbReference>
<dbReference type="SignaLink" id="Q9Y4E8"/>
<dbReference type="SIGNOR" id="Q9Y4E8"/>
<dbReference type="BioGRID-ORCS" id="9958">
    <property type="hits" value="34 hits in 1159 CRISPR screens"/>
</dbReference>
<dbReference type="CD-CODE" id="1A0B17A6">
    <property type="entry name" value="cGAS foci"/>
</dbReference>
<dbReference type="CD-CODE" id="FB4E32DD">
    <property type="entry name" value="Presynaptic clusters and postsynaptic densities"/>
</dbReference>
<dbReference type="ChiTaRS" id="USP15">
    <property type="organism name" value="human"/>
</dbReference>
<dbReference type="EvolutionaryTrace" id="Q9Y4E8"/>
<dbReference type="GeneWiki" id="USP15"/>
<dbReference type="GenomeRNAi" id="9958"/>
<dbReference type="Pharos" id="Q9Y4E8">
    <property type="development level" value="Tbio"/>
</dbReference>
<dbReference type="PRO" id="PR:Q9Y4E8"/>
<dbReference type="Proteomes" id="UP000005640">
    <property type="component" value="Chromosome 12"/>
</dbReference>
<dbReference type="RNAct" id="Q9Y4E8">
    <property type="molecule type" value="protein"/>
</dbReference>
<dbReference type="Bgee" id="ENSG00000135655">
    <property type="expression patterns" value="Expressed in monocyte and 199 other cell types or tissues"/>
</dbReference>
<dbReference type="ExpressionAtlas" id="Q9Y4E8">
    <property type="expression patterns" value="baseline and differential"/>
</dbReference>
<dbReference type="GO" id="GO:0005737">
    <property type="term" value="C:cytoplasm"/>
    <property type="evidence" value="ECO:0000314"/>
    <property type="project" value="UniProtKB"/>
</dbReference>
<dbReference type="GO" id="GO:0005829">
    <property type="term" value="C:cytosol"/>
    <property type="evidence" value="ECO:0000314"/>
    <property type="project" value="HPA"/>
</dbReference>
<dbReference type="GO" id="GO:0005739">
    <property type="term" value="C:mitochondrion"/>
    <property type="evidence" value="ECO:0007669"/>
    <property type="project" value="UniProtKB-SubCell"/>
</dbReference>
<dbReference type="GO" id="GO:0016604">
    <property type="term" value="C:nuclear body"/>
    <property type="evidence" value="ECO:0000314"/>
    <property type="project" value="HPA"/>
</dbReference>
<dbReference type="GO" id="GO:0005654">
    <property type="term" value="C:nucleoplasm"/>
    <property type="evidence" value="ECO:0000314"/>
    <property type="project" value="HPA"/>
</dbReference>
<dbReference type="GO" id="GO:0005634">
    <property type="term" value="C:nucleus"/>
    <property type="evidence" value="ECO:0000314"/>
    <property type="project" value="UniProtKB"/>
</dbReference>
<dbReference type="GO" id="GO:0004843">
    <property type="term" value="F:cysteine-type deubiquitinase activity"/>
    <property type="evidence" value="ECO:0000314"/>
    <property type="project" value="UniProtKB"/>
</dbReference>
<dbReference type="GO" id="GO:0004197">
    <property type="term" value="F:cysteine-type endopeptidase activity"/>
    <property type="evidence" value="ECO:0000315"/>
    <property type="project" value="UniProtKB"/>
</dbReference>
<dbReference type="GO" id="GO:0101005">
    <property type="term" value="F:deubiquitinase activity"/>
    <property type="evidence" value="ECO:0000314"/>
    <property type="project" value="UniProt"/>
</dbReference>
<dbReference type="GO" id="GO:0042802">
    <property type="term" value="F:identical protein binding"/>
    <property type="evidence" value="ECO:0000353"/>
    <property type="project" value="IntAct"/>
</dbReference>
<dbReference type="GO" id="GO:1990380">
    <property type="term" value="F:K48-linked deubiquitinase activity"/>
    <property type="evidence" value="ECO:0000314"/>
    <property type="project" value="CACAO"/>
</dbReference>
<dbReference type="GO" id="GO:0046332">
    <property type="term" value="F:SMAD binding"/>
    <property type="evidence" value="ECO:0000353"/>
    <property type="project" value="UniProtKB"/>
</dbReference>
<dbReference type="GO" id="GO:0005160">
    <property type="term" value="F:transforming growth factor beta receptor binding"/>
    <property type="evidence" value="ECO:0000353"/>
    <property type="project" value="UniProtKB"/>
</dbReference>
<dbReference type="GO" id="GO:0061649">
    <property type="term" value="F:ubiquitin-modified histone reader activity"/>
    <property type="evidence" value="ECO:0000314"/>
    <property type="project" value="UniProtKB"/>
</dbReference>
<dbReference type="GO" id="GO:0030509">
    <property type="term" value="P:BMP signaling pathway"/>
    <property type="evidence" value="ECO:0000314"/>
    <property type="project" value="UniProtKB"/>
</dbReference>
<dbReference type="GO" id="GO:0035520">
    <property type="term" value="P:monoubiquitinated protein deubiquitination"/>
    <property type="evidence" value="ECO:0000314"/>
    <property type="project" value="UniProtKB"/>
</dbReference>
<dbReference type="GO" id="GO:1905035">
    <property type="term" value="P:negative regulation of antifungal innate immune response"/>
    <property type="evidence" value="ECO:0000314"/>
    <property type="project" value="UniProtKB"/>
</dbReference>
<dbReference type="GO" id="GO:0030512">
    <property type="term" value="P:negative regulation of transforming growth factor beta receptor signaling pathway"/>
    <property type="evidence" value="ECO:0000315"/>
    <property type="project" value="UniProtKB"/>
</dbReference>
<dbReference type="GO" id="GO:1900246">
    <property type="term" value="P:positive regulation of RIG-I signaling pathway"/>
    <property type="evidence" value="ECO:0000314"/>
    <property type="project" value="CACAO"/>
</dbReference>
<dbReference type="GO" id="GO:0016579">
    <property type="term" value="P:protein deubiquitination"/>
    <property type="evidence" value="ECO:0000314"/>
    <property type="project" value="UniProtKB"/>
</dbReference>
<dbReference type="GO" id="GO:1990167">
    <property type="term" value="P:protein K27-linked deubiquitination"/>
    <property type="evidence" value="ECO:0000314"/>
    <property type="project" value="UniProtKB"/>
</dbReference>
<dbReference type="GO" id="GO:0006508">
    <property type="term" value="P:proteolysis"/>
    <property type="evidence" value="ECO:0007669"/>
    <property type="project" value="UniProtKB-KW"/>
</dbReference>
<dbReference type="GO" id="GO:1902238">
    <property type="term" value="P:regulation of intrinsic apoptotic signaling pathway in response to osmotic stress by p53 class mediator"/>
    <property type="evidence" value="ECO:0007669"/>
    <property type="project" value="Ensembl"/>
</dbReference>
<dbReference type="GO" id="GO:0051252">
    <property type="term" value="P:regulation of RNA metabolic process"/>
    <property type="evidence" value="ECO:0000314"/>
    <property type="project" value="UniProt"/>
</dbReference>
<dbReference type="GO" id="GO:0140673">
    <property type="term" value="P:transcription elongation-coupled chromatin remodeling"/>
    <property type="evidence" value="ECO:0000314"/>
    <property type="project" value="UniProtKB"/>
</dbReference>
<dbReference type="GO" id="GO:0007179">
    <property type="term" value="P:transforming growth factor beta receptor signaling pathway"/>
    <property type="evidence" value="ECO:0000314"/>
    <property type="project" value="UniProtKB"/>
</dbReference>
<dbReference type="CDD" id="cd02674">
    <property type="entry name" value="Peptidase_C19R"/>
    <property type="match status" value="1"/>
</dbReference>
<dbReference type="FunFam" id="3.30.2230.10:FF:000003">
    <property type="entry name" value="ubiquitin carboxyl-terminal hydrolase 15 isoform X1"/>
    <property type="match status" value="1"/>
</dbReference>
<dbReference type="FunFam" id="3.90.70.10:FF:000013">
    <property type="entry name" value="ubiquitin carboxyl-terminal hydrolase 15 isoform X1"/>
    <property type="match status" value="1"/>
</dbReference>
<dbReference type="FunFam" id="3.90.70.10:FF:000034">
    <property type="entry name" value="ubiquitin carboxyl-terminal hydrolase 15 isoform X1"/>
    <property type="match status" value="1"/>
</dbReference>
<dbReference type="FunFam" id="3.10.20.90:FF:000020">
    <property type="entry name" value="ubiquitin carboxyl-terminal hydrolase 15 isoform X2"/>
    <property type="match status" value="1"/>
</dbReference>
<dbReference type="Gene3D" id="3.90.70.10">
    <property type="entry name" value="Cysteine proteinases"/>
    <property type="match status" value="2"/>
</dbReference>
<dbReference type="Gene3D" id="3.30.2230.10">
    <property type="entry name" value="DUSP-like"/>
    <property type="match status" value="1"/>
</dbReference>
<dbReference type="Gene3D" id="3.10.20.90">
    <property type="entry name" value="Phosphatidylinositol 3-kinase Catalytic Subunit, Chain A, domain 1"/>
    <property type="match status" value="1"/>
</dbReference>
<dbReference type="InterPro" id="IPR035927">
    <property type="entry name" value="DUSP-like_sf"/>
</dbReference>
<dbReference type="InterPro" id="IPR038765">
    <property type="entry name" value="Papain-like_cys_pep_sf"/>
</dbReference>
<dbReference type="InterPro" id="IPR006615">
    <property type="entry name" value="Pept_C19_DUSP"/>
</dbReference>
<dbReference type="InterPro" id="IPR001394">
    <property type="entry name" value="Peptidase_C19_UCH"/>
</dbReference>
<dbReference type="InterPro" id="IPR013792">
    <property type="entry name" value="RNA3'P_cycl/enolpyr_Trfase_a/b"/>
</dbReference>
<dbReference type="InterPro" id="IPR050185">
    <property type="entry name" value="Ub_carboxyl-term_hydrolase"/>
</dbReference>
<dbReference type="InterPro" id="IPR028135">
    <property type="entry name" value="Ub_USP-typ"/>
</dbReference>
<dbReference type="InterPro" id="IPR029071">
    <property type="entry name" value="Ubiquitin-like_domsf"/>
</dbReference>
<dbReference type="InterPro" id="IPR029346">
    <property type="entry name" value="USP_C"/>
</dbReference>
<dbReference type="InterPro" id="IPR018200">
    <property type="entry name" value="USP_CS"/>
</dbReference>
<dbReference type="InterPro" id="IPR028889">
    <property type="entry name" value="USP_dom"/>
</dbReference>
<dbReference type="PANTHER" id="PTHR21646">
    <property type="entry name" value="UBIQUITIN CARBOXYL-TERMINAL HYDROLASE"/>
    <property type="match status" value="1"/>
</dbReference>
<dbReference type="PANTHER" id="PTHR21646:SF28">
    <property type="entry name" value="UBIQUITIN CARBOXYL-TERMINAL HYDROLASE 15"/>
    <property type="match status" value="1"/>
</dbReference>
<dbReference type="Pfam" id="PF06337">
    <property type="entry name" value="DUSP"/>
    <property type="match status" value="1"/>
</dbReference>
<dbReference type="Pfam" id="PF14836">
    <property type="entry name" value="Ubiquitin_3"/>
    <property type="match status" value="1"/>
</dbReference>
<dbReference type="Pfam" id="PF00443">
    <property type="entry name" value="UCH"/>
    <property type="match status" value="1"/>
</dbReference>
<dbReference type="Pfam" id="PF14533">
    <property type="entry name" value="USP7_C2"/>
    <property type="match status" value="1"/>
</dbReference>
<dbReference type="SMART" id="SM00695">
    <property type="entry name" value="DUSP"/>
    <property type="match status" value="1"/>
</dbReference>
<dbReference type="SUPFAM" id="SSF54001">
    <property type="entry name" value="Cysteine proteinases"/>
    <property type="match status" value="1"/>
</dbReference>
<dbReference type="SUPFAM" id="SSF143791">
    <property type="entry name" value="DUSP-like"/>
    <property type="match status" value="1"/>
</dbReference>
<dbReference type="SUPFAM" id="SSF55205">
    <property type="entry name" value="EPT/RTPC-like"/>
    <property type="match status" value="1"/>
</dbReference>
<dbReference type="SUPFAM" id="SSF54236">
    <property type="entry name" value="Ubiquitin-like"/>
    <property type="match status" value="1"/>
</dbReference>
<dbReference type="PROSITE" id="PS51283">
    <property type="entry name" value="DUSP"/>
    <property type="match status" value="1"/>
</dbReference>
<dbReference type="PROSITE" id="PS00972">
    <property type="entry name" value="USP_1"/>
    <property type="match status" value="1"/>
</dbReference>
<dbReference type="PROSITE" id="PS00973">
    <property type="entry name" value="USP_2"/>
    <property type="match status" value="1"/>
</dbReference>
<dbReference type="PROSITE" id="PS50235">
    <property type="entry name" value="USP_3"/>
    <property type="match status" value="1"/>
</dbReference>
<name>UBP15_HUMAN</name>
<reference key="1">
    <citation type="submission" date="1998-11" db="EMBL/GenBank/DDBJ databases">
        <title>Identification and characterization of a new human deubiquitinating enzyme Unph4.</title>
        <authorList>
            <person name="Kim K.I."/>
            <person name="Nagase T."/>
            <person name="Chung C.H."/>
        </authorList>
    </citation>
    <scope>NUCLEOTIDE SEQUENCE [MRNA] (ISOFORM 2)</scope>
    <source>
        <tissue>Brain</tissue>
    </source>
</reference>
<reference key="2">
    <citation type="journal article" date="1998" name="DNA Res.">
        <title>Prediction of the coding sequences of unidentified human genes. IX. The complete sequences of 100 new cDNA clones from brain which can code for large proteins in vitro.</title>
        <authorList>
            <person name="Nagase T."/>
            <person name="Ishikawa K."/>
            <person name="Miyajima N."/>
            <person name="Tanaka A."/>
            <person name="Kotani H."/>
            <person name="Nomura N."/>
            <person name="Ohara O."/>
        </authorList>
    </citation>
    <scope>NUCLEOTIDE SEQUENCE [LARGE SCALE MRNA] (ISOFORM 2)</scope>
    <source>
        <tissue>Brain</tissue>
    </source>
</reference>
<reference key="3">
    <citation type="journal article" date="2002" name="DNA Res.">
        <title>Construction of expression-ready cDNA clones for KIAA genes: manual curation of 330 KIAA cDNA clones.</title>
        <authorList>
            <person name="Nakajima D."/>
            <person name="Okazaki N."/>
            <person name="Yamakawa H."/>
            <person name="Kikuno R."/>
            <person name="Ohara O."/>
            <person name="Nagase T."/>
        </authorList>
    </citation>
    <scope>SEQUENCE REVISION</scope>
</reference>
<reference key="4">
    <citation type="submission" date="1999-05" db="EMBL/GenBank/DDBJ databases">
        <title>A catalogue of genes in the human dermal papilla cells as identified by expressed sequence tags.</title>
        <authorList>
            <person name="Kim M.K."/>
            <person name="Kim Y.H."/>
            <person name="Seo J.M."/>
            <person name="Lee H.M."/>
            <person name="Chung H.J."/>
            <person name="Sohn M.Y."/>
            <person name="Hwang S.Y."/>
            <person name="Im S.U."/>
            <person name="Jung E.J."/>
            <person name="Lee J.H."/>
            <person name="Kim J.C."/>
        </authorList>
    </citation>
    <scope>NUCLEOTIDE SEQUENCE [LARGE SCALE MRNA] (ISOFORM 1)</scope>
    <source>
        <tissue>Hair follicle dermal papilla</tissue>
    </source>
</reference>
<reference key="5">
    <citation type="journal article" date="2004" name="Nat. Genet.">
        <title>Complete sequencing and characterization of 21,243 full-length human cDNAs.</title>
        <authorList>
            <person name="Ota T."/>
            <person name="Suzuki Y."/>
            <person name="Nishikawa T."/>
            <person name="Otsuki T."/>
            <person name="Sugiyama T."/>
            <person name="Irie R."/>
            <person name="Wakamatsu A."/>
            <person name="Hayashi K."/>
            <person name="Sato H."/>
            <person name="Nagai K."/>
            <person name="Kimura K."/>
            <person name="Makita H."/>
            <person name="Sekine M."/>
            <person name="Obayashi M."/>
            <person name="Nishi T."/>
            <person name="Shibahara T."/>
            <person name="Tanaka T."/>
            <person name="Ishii S."/>
            <person name="Yamamoto J."/>
            <person name="Saito K."/>
            <person name="Kawai Y."/>
            <person name="Isono Y."/>
            <person name="Nakamura Y."/>
            <person name="Nagahari K."/>
            <person name="Murakami K."/>
            <person name="Yasuda T."/>
            <person name="Iwayanagi T."/>
            <person name="Wagatsuma M."/>
            <person name="Shiratori A."/>
            <person name="Sudo H."/>
            <person name="Hosoiri T."/>
            <person name="Kaku Y."/>
            <person name="Kodaira H."/>
            <person name="Kondo H."/>
            <person name="Sugawara M."/>
            <person name="Takahashi M."/>
            <person name="Kanda K."/>
            <person name="Yokoi T."/>
            <person name="Furuya T."/>
            <person name="Kikkawa E."/>
            <person name="Omura Y."/>
            <person name="Abe K."/>
            <person name="Kamihara K."/>
            <person name="Katsuta N."/>
            <person name="Sato K."/>
            <person name="Tanikawa M."/>
            <person name="Yamazaki M."/>
            <person name="Ninomiya K."/>
            <person name="Ishibashi T."/>
            <person name="Yamashita H."/>
            <person name="Murakawa K."/>
            <person name="Fujimori K."/>
            <person name="Tanai H."/>
            <person name="Kimata M."/>
            <person name="Watanabe M."/>
            <person name="Hiraoka S."/>
            <person name="Chiba Y."/>
            <person name="Ishida S."/>
            <person name="Ono Y."/>
            <person name="Takiguchi S."/>
            <person name="Watanabe S."/>
            <person name="Yosida M."/>
            <person name="Hotuta T."/>
            <person name="Kusano J."/>
            <person name="Kanehori K."/>
            <person name="Takahashi-Fujii A."/>
            <person name="Hara H."/>
            <person name="Tanase T.-O."/>
            <person name="Nomura Y."/>
            <person name="Togiya S."/>
            <person name="Komai F."/>
            <person name="Hara R."/>
            <person name="Takeuchi K."/>
            <person name="Arita M."/>
            <person name="Imose N."/>
            <person name="Musashino K."/>
            <person name="Yuuki H."/>
            <person name="Oshima A."/>
            <person name="Sasaki N."/>
            <person name="Aotsuka S."/>
            <person name="Yoshikawa Y."/>
            <person name="Matsunawa H."/>
            <person name="Ichihara T."/>
            <person name="Shiohata N."/>
            <person name="Sano S."/>
            <person name="Moriya S."/>
            <person name="Momiyama H."/>
            <person name="Satoh N."/>
            <person name="Takami S."/>
            <person name="Terashima Y."/>
            <person name="Suzuki O."/>
            <person name="Nakagawa S."/>
            <person name="Senoh A."/>
            <person name="Mizoguchi H."/>
            <person name="Goto Y."/>
            <person name="Shimizu F."/>
            <person name="Wakebe H."/>
            <person name="Hishigaki H."/>
            <person name="Watanabe T."/>
            <person name="Sugiyama A."/>
            <person name="Takemoto M."/>
            <person name="Kawakami B."/>
            <person name="Yamazaki M."/>
            <person name="Watanabe K."/>
            <person name="Kumagai A."/>
            <person name="Itakura S."/>
            <person name="Fukuzumi Y."/>
            <person name="Fujimori Y."/>
            <person name="Komiyama M."/>
            <person name="Tashiro H."/>
            <person name="Tanigami A."/>
            <person name="Fujiwara T."/>
            <person name="Ono T."/>
            <person name="Yamada K."/>
            <person name="Fujii Y."/>
            <person name="Ozaki K."/>
            <person name="Hirao M."/>
            <person name="Ohmori Y."/>
            <person name="Kawabata A."/>
            <person name="Hikiji T."/>
            <person name="Kobatake N."/>
            <person name="Inagaki H."/>
            <person name="Ikema Y."/>
            <person name="Okamoto S."/>
            <person name="Okitani R."/>
            <person name="Kawakami T."/>
            <person name="Noguchi S."/>
            <person name="Itoh T."/>
            <person name="Shigeta K."/>
            <person name="Senba T."/>
            <person name="Matsumura K."/>
            <person name="Nakajima Y."/>
            <person name="Mizuno T."/>
            <person name="Morinaga M."/>
            <person name="Sasaki M."/>
            <person name="Togashi T."/>
            <person name="Oyama M."/>
            <person name="Hata H."/>
            <person name="Watanabe M."/>
            <person name="Komatsu T."/>
            <person name="Mizushima-Sugano J."/>
            <person name="Satoh T."/>
            <person name="Shirai Y."/>
            <person name="Takahashi Y."/>
            <person name="Nakagawa K."/>
            <person name="Okumura K."/>
            <person name="Nagase T."/>
            <person name="Nomura N."/>
            <person name="Kikuchi H."/>
            <person name="Masuho Y."/>
            <person name="Yamashita R."/>
            <person name="Nakai K."/>
            <person name="Yada T."/>
            <person name="Nakamura Y."/>
            <person name="Ohara O."/>
            <person name="Isogai T."/>
            <person name="Sugano S."/>
        </authorList>
    </citation>
    <scope>NUCLEOTIDE SEQUENCE [LARGE SCALE MRNA] (ISOFORM 4)</scope>
    <source>
        <tissue>Placenta</tissue>
    </source>
</reference>
<reference key="6">
    <citation type="journal article" date="2006" name="Nature">
        <title>The finished DNA sequence of human chromosome 12.</title>
        <authorList>
            <person name="Scherer S.E."/>
            <person name="Muzny D.M."/>
            <person name="Buhay C.J."/>
            <person name="Chen R."/>
            <person name="Cree A."/>
            <person name="Ding Y."/>
            <person name="Dugan-Rocha S."/>
            <person name="Gill R."/>
            <person name="Gunaratne P."/>
            <person name="Harris R.A."/>
            <person name="Hawes A.C."/>
            <person name="Hernandez J."/>
            <person name="Hodgson A.V."/>
            <person name="Hume J."/>
            <person name="Jackson A."/>
            <person name="Khan Z.M."/>
            <person name="Kovar-Smith C."/>
            <person name="Lewis L.R."/>
            <person name="Lozado R.J."/>
            <person name="Metzker M.L."/>
            <person name="Milosavljevic A."/>
            <person name="Miner G.R."/>
            <person name="Montgomery K.T."/>
            <person name="Morgan M.B."/>
            <person name="Nazareth L.V."/>
            <person name="Scott G."/>
            <person name="Sodergren E."/>
            <person name="Song X.-Z."/>
            <person name="Steffen D."/>
            <person name="Lovering R.C."/>
            <person name="Wheeler D.A."/>
            <person name="Worley K.C."/>
            <person name="Yuan Y."/>
            <person name="Zhang Z."/>
            <person name="Adams C.Q."/>
            <person name="Ansari-Lari M.A."/>
            <person name="Ayele M."/>
            <person name="Brown M.J."/>
            <person name="Chen G."/>
            <person name="Chen Z."/>
            <person name="Clerc-Blankenburg K.P."/>
            <person name="Davis C."/>
            <person name="Delgado O."/>
            <person name="Dinh H.H."/>
            <person name="Draper H."/>
            <person name="Gonzalez-Garay M.L."/>
            <person name="Havlak P."/>
            <person name="Jackson L.R."/>
            <person name="Jacob L.S."/>
            <person name="Kelly S.H."/>
            <person name="Li L."/>
            <person name="Li Z."/>
            <person name="Liu J."/>
            <person name="Liu W."/>
            <person name="Lu J."/>
            <person name="Maheshwari M."/>
            <person name="Nguyen B.-V."/>
            <person name="Okwuonu G.O."/>
            <person name="Pasternak S."/>
            <person name="Perez L.M."/>
            <person name="Plopper F.J.H."/>
            <person name="Santibanez J."/>
            <person name="Shen H."/>
            <person name="Tabor P.E."/>
            <person name="Verduzco D."/>
            <person name="Waldron L."/>
            <person name="Wang Q."/>
            <person name="Williams G.A."/>
            <person name="Zhang J."/>
            <person name="Zhou J."/>
            <person name="Allen C.C."/>
            <person name="Amin A.G."/>
            <person name="Anyalebechi V."/>
            <person name="Bailey M."/>
            <person name="Barbaria J.A."/>
            <person name="Bimage K.E."/>
            <person name="Bryant N.P."/>
            <person name="Burch P.E."/>
            <person name="Burkett C.E."/>
            <person name="Burrell K.L."/>
            <person name="Calderon E."/>
            <person name="Cardenas V."/>
            <person name="Carter K."/>
            <person name="Casias K."/>
            <person name="Cavazos I."/>
            <person name="Cavazos S.R."/>
            <person name="Ceasar H."/>
            <person name="Chacko J."/>
            <person name="Chan S.N."/>
            <person name="Chavez D."/>
            <person name="Christopoulos C."/>
            <person name="Chu J."/>
            <person name="Cockrell R."/>
            <person name="Cox C.D."/>
            <person name="Dang M."/>
            <person name="Dathorne S.R."/>
            <person name="David R."/>
            <person name="Davis C.M."/>
            <person name="Davy-Carroll L."/>
            <person name="Deshazo D.R."/>
            <person name="Donlin J.E."/>
            <person name="D'Souza L."/>
            <person name="Eaves K.A."/>
            <person name="Egan A."/>
            <person name="Emery-Cohen A.J."/>
            <person name="Escotto M."/>
            <person name="Flagg N."/>
            <person name="Forbes L.D."/>
            <person name="Gabisi A.M."/>
            <person name="Garza M."/>
            <person name="Hamilton C."/>
            <person name="Henderson N."/>
            <person name="Hernandez O."/>
            <person name="Hines S."/>
            <person name="Hogues M.E."/>
            <person name="Huang M."/>
            <person name="Idlebird D.G."/>
            <person name="Johnson R."/>
            <person name="Jolivet A."/>
            <person name="Jones S."/>
            <person name="Kagan R."/>
            <person name="King L.M."/>
            <person name="Leal B."/>
            <person name="Lebow H."/>
            <person name="Lee S."/>
            <person name="LeVan J.M."/>
            <person name="Lewis L.C."/>
            <person name="London P."/>
            <person name="Lorensuhewa L.M."/>
            <person name="Loulseged H."/>
            <person name="Lovett D.A."/>
            <person name="Lucier A."/>
            <person name="Lucier R.L."/>
            <person name="Ma J."/>
            <person name="Madu R.C."/>
            <person name="Mapua P."/>
            <person name="Martindale A.D."/>
            <person name="Martinez E."/>
            <person name="Massey E."/>
            <person name="Mawhiney S."/>
            <person name="Meador M.G."/>
            <person name="Mendez S."/>
            <person name="Mercado C."/>
            <person name="Mercado I.C."/>
            <person name="Merritt C.E."/>
            <person name="Miner Z.L."/>
            <person name="Minja E."/>
            <person name="Mitchell T."/>
            <person name="Mohabbat F."/>
            <person name="Mohabbat K."/>
            <person name="Montgomery B."/>
            <person name="Moore N."/>
            <person name="Morris S."/>
            <person name="Munidasa M."/>
            <person name="Ngo R.N."/>
            <person name="Nguyen N.B."/>
            <person name="Nickerson E."/>
            <person name="Nwaokelemeh O.O."/>
            <person name="Nwokenkwo S."/>
            <person name="Obregon M."/>
            <person name="Oguh M."/>
            <person name="Oragunye N."/>
            <person name="Oviedo R.J."/>
            <person name="Parish B.J."/>
            <person name="Parker D.N."/>
            <person name="Parrish J."/>
            <person name="Parks K.L."/>
            <person name="Paul H.A."/>
            <person name="Payton B.A."/>
            <person name="Perez A."/>
            <person name="Perrin W."/>
            <person name="Pickens A."/>
            <person name="Primus E.L."/>
            <person name="Pu L.-L."/>
            <person name="Puazo M."/>
            <person name="Quiles M.M."/>
            <person name="Quiroz J.B."/>
            <person name="Rabata D."/>
            <person name="Reeves K."/>
            <person name="Ruiz S.J."/>
            <person name="Shao H."/>
            <person name="Sisson I."/>
            <person name="Sonaike T."/>
            <person name="Sorelle R.P."/>
            <person name="Sutton A.E."/>
            <person name="Svatek A.F."/>
            <person name="Svetz L.A."/>
            <person name="Tamerisa K.S."/>
            <person name="Taylor T.R."/>
            <person name="Teague B."/>
            <person name="Thomas N."/>
            <person name="Thorn R.D."/>
            <person name="Trejos Z.Y."/>
            <person name="Trevino B.K."/>
            <person name="Ukegbu O.N."/>
            <person name="Urban J.B."/>
            <person name="Vasquez L.I."/>
            <person name="Vera V.A."/>
            <person name="Villasana D.M."/>
            <person name="Wang L."/>
            <person name="Ward-Moore S."/>
            <person name="Warren J.T."/>
            <person name="Wei X."/>
            <person name="White F."/>
            <person name="Williamson A.L."/>
            <person name="Wleczyk R."/>
            <person name="Wooden H.S."/>
            <person name="Wooden S.H."/>
            <person name="Yen J."/>
            <person name="Yoon L."/>
            <person name="Yoon V."/>
            <person name="Zorrilla S.E."/>
            <person name="Nelson D."/>
            <person name="Kucherlapati R."/>
            <person name="Weinstock G."/>
            <person name="Gibbs R.A."/>
        </authorList>
    </citation>
    <scope>NUCLEOTIDE SEQUENCE [LARGE SCALE GENOMIC DNA]</scope>
</reference>
<reference key="7">
    <citation type="journal article" date="2004" name="Genome Res.">
        <title>The status, quality, and expansion of the NIH full-length cDNA project: the Mammalian Gene Collection (MGC).</title>
        <authorList>
            <consortium name="The MGC Project Team"/>
        </authorList>
    </citation>
    <scope>NUCLEOTIDE SEQUENCE [LARGE SCALE MRNA] (ISOFORMS 2 AND 4)</scope>
    <source>
        <tissue>Brain</tissue>
        <tissue>Lung</tissue>
    </source>
</reference>
<reference key="8">
    <citation type="submission" date="2007-07" db="UniProtKB">
        <authorList>
            <person name="Bienvenut W.V."/>
            <person name="Matallanas D."/>
            <person name="Cooper W.N."/>
            <person name="Kolch W."/>
        </authorList>
    </citation>
    <scope>PROTEIN SEQUENCE OF 2-21; 475-482 AND 924-932</scope>
    <scope>CLEAVAGE OF INITIATOR METHIONINE</scope>
    <scope>ACETYLATION AT ALA-2</scope>
    <scope>IDENTIFICATION BY MASS SPECTROMETRY</scope>
    <source>
        <tissue>Mammary carcinoma</tissue>
    </source>
</reference>
<reference key="9">
    <citation type="submission" date="1997-07" db="EMBL/GenBank/DDBJ databases">
        <title>Cloning and identification of human Unph-2.</title>
        <authorList>
            <person name="Kimura Y."/>
            <person name="Saya H."/>
            <person name="Nakao M."/>
        </authorList>
    </citation>
    <scope>NUCLEOTIDE SEQUENCE [MRNA] OF 19-981 (ISOFORM 3)</scope>
    <source>
        <tissue>Fetal brain</tissue>
    </source>
</reference>
<reference key="10">
    <citation type="journal article" date="1999" name="Genomics">
        <title>Identification, functional characterization, and chromosomal localization of USP15, a novel human ubiquitin-specific protease related to the UNP oncoprotein, and a systematic nomenclature for human ubiquitin-specific proteases.</title>
        <authorList>
            <person name="Baker R.T."/>
            <person name="Wang X.-W."/>
            <person name="Woollatt E."/>
            <person name="White J.A."/>
            <person name="Sutherland G.R."/>
        </authorList>
    </citation>
    <scope>IDENTIFICATION (ISOFORM 2)</scope>
    <scope>CATALYTIC ACTIVITY</scope>
</reference>
<reference key="11">
    <citation type="journal article" date="2003" name="Mamm. Genome">
        <title>Isolation and characterization of the mouse ubiquitin-specific protease Usp15.</title>
        <authorList>
            <person name="Angelats C."/>
            <person name="Wang X.-W."/>
            <person name="Jermiin L.S."/>
            <person name="Copeland N.G."/>
            <person name="Jenkins N.A."/>
            <person name="Baker R.T."/>
        </authorList>
    </citation>
    <scope>ALTERNATIVE SPLICING (ISOFORMS 1 AND 2)</scope>
</reference>
<reference key="12">
    <citation type="journal article" date="2005" name="Curr. Biol.">
        <title>The zinc finger of the CSN-associated deubiquitinating enzyme USP15 is essential to rescue the E3 ligase Rbx1.</title>
        <authorList>
            <person name="Hetfeld B.K."/>
            <person name="Helfrich A."/>
            <person name="Kapelari B."/>
            <person name="Scheel H."/>
            <person name="Hofmann K."/>
            <person name="Guterman A."/>
            <person name="Glickman M."/>
            <person name="Schade R."/>
            <person name="Kloetzel P.M."/>
            <person name="Dubiel W."/>
        </authorList>
    </citation>
    <scope>FUNCTION</scope>
    <scope>CATALYTIC ACTIVITY</scope>
    <scope>MUTAGENESIS OF CYS-812</scope>
    <scope>IDENTIFICATION IN A COMPLEX WITH THE COP9 SIGNALOSOME</scope>
    <scope>PHOSPHORYLATION</scope>
    <scope>UBIQUITINATION</scope>
</reference>
<reference key="13">
    <citation type="journal article" date="2006" name="Nat. Biotechnol.">
        <title>A probability-based approach for high-throughput protein phosphorylation analysis and site localization.</title>
        <authorList>
            <person name="Beausoleil S.A."/>
            <person name="Villen J."/>
            <person name="Gerber S.A."/>
            <person name="Rush J."/>
            <person name="Gygi S.P."/>
        </authorList>
    </citation>
    <scope>PHOSPHORYLATION [LARGE SCALE ANALYSIS] AT SER-229</scope>
    <scope>IDENTIFICATION BY MASS SPECTROMETRY [LARGE SCALE ANALYSIS]</scope>
    <source>
        <tissue>Cervix carcinoma</tissue>
    </source>
</reference>
<reference key="14">
    <citation type="journal article" date="2007" name="EMBO J.">
        <title>CSN controls NF-kappaB by deubiquitinylation of IkappaBalpha.</title>
        <authorList>
            <person name="Schweitzer K."/>
            <person name="Bozko P.M."/>
            <person name="Dubiel W."/>
            <person name="Naumann M."/>
        </authorList>
    </citation>
    <scope>FUNCTION</scope>
</reference>
<reference key="15">
    <citation type="journal article" date="2008" name="Proc. Natl. Acad. Sci. U.S.A.">
        <title>A quantitative atlas of mitotic phosphorylation.</title>
        <authorList>
            <person name="Dephoure N."/>
            <person name="Zhou C."/>
            <person name="Villen J."/>
            <person name="Beausoleil S.A."/>
            <person name="Bakalarski C.E."/>
            <person name="Elledge S.J."/>
            <person name="Gygi S.P."/>
        </authorList>
    </citation>
    <scope>PHOSPHORYLATION [LARGE SCALE ANALYSIS] AT SER-229; SER-961 AND SER-965</scope>
    <scope>IDENTIFICATION BY MASS SPECTROMETRY [LARGE SCALE ANALYSIS]</scope>
    <source>
        <tissue>Cervix carcinoma</tissue>
    </source>
</reference>
<reference key="16">
    <citation type="journal article" date="2009" name="Anal. Chem.">
        <title>Lys-N and trypsin cover complementary parts of the phosphoproteome in a refined SCX-based approach.</title>
        <authorList>
            <person name="Gauci S."/>
            <person name="Helbig A.O."/>
            <person name="Slijper M."/>
            <person name="Krijgsveld J."/>
            <person name="Heck A.J."/>
            <person name="Mohammed S."/>
        </authorList>
    </citation>
    <scope>ACETYLATION [LARGE SCALE ANALYSIS] AT ALA-2</scope>
    <scope>CLEAVAGE OF INITIATOR METHIONINE [LARGE SCALE ANALYSIS]</scope>
    <scope>IDENTIFICATION BY MASS SPECTROMETRY [LARGE SCALE ANALYSIS]</scope>
</reference>
<reference key="17">
    <citation type="journal article" date="2009" name="J. Biol. Chem.">
        <title>COP9 signalosome interacts ATP-dependently with p97/valosin-containing protein (VCP) and controls the ubiquitination status of proteins bound to p97/VCP.</title>
        <authorList>
            <person name="Cayli S."/>
            <person name="Klug J."/>
            <person name="Chapiro J."/>
            <person name="Frohlich S."/>
            <person name="Krasteva G."/>
            <person name="Orel L."/>
            <person name="Meinhardt A."/>
        </authorList>
    </citation>
    <scope>FUNCTION</scope>
</reference>
<reference key="18">
    <citation type="journal article" date="2009" name="J. Mol. Biol.">
        <title>The COP9 signalosome mediates beta-catenin degradation by deneddylation and blocks adenomatous polyposis coli destruction via USP15.</title>
        <authorList>
            <person name="Huang X."/>
            <person name="Langelotz C."/>
            <person name="Hetfeld-Pechoc B.K."/>
            <person name="Schwenk W."/>
            <person name="Dubiel W."/>
        </authorList>
    </citation>
    <scope>FUNCTION</scope>
    <scope>MUTAGENESIS OF CYS-812</scope>
</reference>
<reference key="19">
    <citation type="journal article" date="2009" name="J. Virol.">
        <title>The ubiquitin-specific peptidase USP15 regulates human papillomavirus type 16 E6 protein stability.</title>
        <authorList>
            <person name="Vos R.M."/>
            <person name="Altreuter J."/>
            <person name="White E.A."/>
            <person name="Howley P.M."/>
        </authorList>
    </citation>
    <scope>FUNCTION (MICROBIAL INFECTION)</scope>
    <scope>MUTAGENESIS OF CYS-298</scope>
    <scope>INTERACTION WITH HUMAN PAPILLOMAVIRUS TYPE 16 PROTEIN E6 (MICROBIAL INFECTION)</scope>
</reference>
<reference key="20">
    <citation type="journal article" date="2009" name="Sci. Signal.">
        <title>Quantitative phosphoproteomic analysis of T cell receptor signaling reveals system-wide modulation of protein-protein interactions.</title>
        <authorList>
            <person name="Mayya V."/>
            <person name="Lundgren D.H."/>
            <person name="Hwang S.-I."/>
            <person name="Rezaul K."/>
            <person name="Wu L."/>
            <person name="Eng J.K."/>
            <person name="Rodionov V."/>
            <person name="Han D.K."/>
        </authorList>
    </citation>
    <scope>PHOSPHORYLATION [LARGE SCALE ANALYSIS] AT SER-229</scope>
    <scope>IDENTIFICATION BY MASS SPECTROMETRY [LARGE SCALE ANALYSIS]</scope>
    <source>
        <tissue>Leukemic T-cell</tissue>
    </source>
</reference>
<reference key="21">
    <citation type="journal article" date="2010" name="Sci. Signal.">
        <title>Quantitative phosphoproteomics reveals widespread full phosphorylation site occupancy during mitosis.</title>
        <authorList>
            <person name="Olsen J.V."/>
            <person name="Vermeulen M."/>
            <person name="Santamaria A."/>
            <person name="Kumar C."/>
            <person name="Miller M.L."/>
            <person name="Jensen L.J."/>
            <person name="Gnad F."/>
            <person name="Cox J."/>
            <person name="Jensen T.S."/>
            <person name="Nigg E.A."/>
            <person name="Brunak S."/>
            <person name="Mann M."/>
        </authorList>
    </citation>
    <scope>PHOSPHORYLATION [LARGE SCALE ANALYSIS] AT SER-229; SER-242; SER-961 AND SER-965</scope>
    <scope>IDENTIFICATION BY MASS SPECTROMETRY [LARGE SCALE ANALYSIS]</scope>
    <source>
        <tissue>Cervix carcinoma</tissue>
    </source>
</reference>
<reference key="22">
    <citation type="journal article" date="2011" name="BMC Syst. Biol.">
        <title>Initial characterization of the human central proteome.</title>
        <authorList>
            <person name="Burkard T.R."/>
            <person name="Planyavsky M."/>
            <person name="Kaupe I."/>
            <person name="Breitwieser F.P."/>
            <person name="Buerckstuemmer T."/>
            <person name="Bennett K.L."/>
            <person name="Superti-Furga G."/>
            <person name="Colinge J."/>
        </authorList>
    </citation>
    <scope>IDENTIFICATION BY MASS SPECTROMETRY [LARGE SCALE ANALYSIS]</scope>
</reference>
<reference key="23">
    <citation type="journal article" date="2011" name="Nat. Cell Biol.">
        <title>USP15 is a deubiquitylating enzyme for receptor-activated SMADs.</title>
        <authorList>
            <person name="Inui M."/>
            <person name="Manfrin A."/>
            <person name="Mamidi A."/>
            <person name="Martello G."/>
            <person name="Morsut L."/>
            <person name="Soligo S."/>
            <person name="Enzo E."/>
            <person name="Moro S."/>
            <person name="Polo S."/>
            <person name="Dupont S."/>
            <person name="Cordenonsi M."/>
            <person name="Piccolo S."/>
        </authorList>
    </citation>
    <scope>FUNCTION</scope>
    <scope>CATALYTIC ACTIVITY</scope>
    <scope>SUBCELLULAR LOCATION</scope>
    <scope>INTERACTION WITH SMAD1; SMAD2 AND SMAD3</scope>
    <scope>MUTAGENESIS OF CYS-298</scope>
</reference>
<reference key="24">
    <citation type="journal article" date="2011" name="PLoS ONE">
        <title>The inhibitor of growth protein 5 (ING5) depends on INCA1 as a co-factor for its antiproliferative effects.</title>
        <authorList>
            <person name="Zhang F."/>
            <person name="Baeumer N."/>
            <person name="Rode M."/>
            <person name="Ji P."/>
            <person name="Zhang T."/>
            <person name="Berdel W.E."/>
            <person name="Mueller-Tidow C."/>
        </authorList>
    </citation>
    <scope>INTERACTION WITH INCA1</scope>
</reference>
<reference key="25">
    <citation type="journal article" date="2011" name="Sci. Signal.">
        <title>System-wide temporal characterization of the proteome and phosphoproteome of human embryonic stem cell differentiation.</title>
        <authorList>
            <person name="Rigbolt K.T."/>
            <person name="Prokhorova T.A."/>
            <person name="Akimov V."/>
            <person name="Henningsen J."/>
            <person name="Johansen P.T."/>
            <person name="Kratchmarova I."/>
            <person name="Kassem M."/>
            <person name="Mann M."/>
            <person name="Olsen J.V."/>
            <person name="Blagoev B."/>
        </authorList>
    </citation>
    <scope>PHOSPHORYLATION [LARGE SCALE ANALYSIS] AT SER-229</scope>
    <scope>IDENTIFICATION BY MASS SPECTROMETRY [LARGE SCALE ANALYSIS]</scope>
</reference>
<reference key="26">
    <citation type="journal article" date="2012" name="Mol. Cell. Proteomics">
        <title>Comparative large-scale characterisation of plant vs. mammal proteins reveals similar and idiosyncratic N-alpha acetylation features.</title>
        <authorList>
            <person name="Bienvenut W.V."/>
            <person name="Sumpton D."/>
            <person name="Martinez A."/>
            <person name="Lilla S."/>
            <person name="Espagne C."/>
            <person name="Meinnel T."/>
            <person name="Giglione C."/>
        </authorList>
    </citation>
    <scope>ACETYLATION [LARGE SCALE ANALYSIS] AT ALA-2</scope>
    <scope>CLEAVAGE OF INITIATOR METHIONINE [LARGE SCALE ANALYSIS]</scope>
    <scope>IDENTIFICATION BY MASS SPECTROMETRY [LARGE SCALE ANALYSIS]</scope>
</reference>
<reference key="27">
    <citation type="journal article" date="2012" name="Nat. Med.">
        <title>USP15 stabilizes TGF-beta receptor I and promotes oncogenesis through the activation of TGF-beta signaling in glioblastoma.</title>
        <authorList>
            <person name="Eichhorn P.J."/>
            <person name="Rodon L."/>
            <person name="Gonzalez-Junca A."/>
            <person name="Dirac A."/>
            <person name="Gili M."/>
            <person name="Martinez-Saez E."/>
            <person name="Aura C."/>
            <person name="Barba I."/>
            <person name="Peg V."/>
            <person name="Prat A."/>
            <person name="Cuartas I."/>
            <person name="Jimenez J."/>
            <person name="Garcia-Dorado D."/>
            <person name="Sahuquillo J."/>
            <person name="Bernards R."/>
            <person name="Baselga J."/>
            <person name="Seoane J."/>
        </authorList>
    </citation>
    <scope>FUNCTION</scope>
    <scope>CATALYTIC ACTIVITY</scope>
    <scope>INTERACTION WITH TGFBR1; SMAD7 AND SMURF2</scope>
    <scope>MUTAGENESIS OF CYS-298</scope>
</reference>
<reference key="28">
    <citation type="journal article" date="2012" name="Proc. Natl. Acad. Sci. U.S.A.">
        <title>N-terminal acetylome analyses and functional insights of the N-terminal acetyltransferase NatB.</title>
        <authorList>
            <person name="Van Damme P."/>
            <person name="Lasa M."/>
            <person name="Polevoda B."/>
            <person name="Gazquez C."/>
            <person name="Elosegui-Artola A."/>
            <person name="Kim D.S."/>
            <person name="De Juan-Pardo E."/>
            <person name="Demeyer K."/>
            <person name="Hole K."/>
            <person name="Larrea E."/>
            <person name="Timmerman E."/>
            <person name="Prieto J."/>
            <person name="Arnesen T."/>
            <person name="Sherman F."/>
            <person name="Gevaert K."/>
            <person name="Aldabe R."/>
        </authorList>
    </citation>
    <scope>ACETYLATION [LARGE SCALE ANALYSIS] AT ALA-2</scope>
    <scope>CLEAVAGE OF INITIATOR METHIONINE [LARGE SCALE ANALYSIS]</scope>
    <scope>IDENTIFICATION BY MASS SPECTROMETRY [LARGE SCALE ANALYSIS]</scope>
</reference>
<reference key="29">
    <citation type="journal article" date="2013" name="J. Proteome Res.">
        <title>Toward a comprehensive characterization of a human cancer cell phosphoproteome.</title>
        <authorList>
            <person name="Zhou H."/>
            <person name="Di Palma S."/>
            <person name="Preisinger C."/>
            <person name="Peng M."/>
            <person name="Polat A.N."/>
            <person name="Heck A.J."/>
            <person name="Mohammed S."/>
        </authorList>
    </citation>
    <scope>PHOSPHORYLATION [LARGE SCALE ANALYSIS] AT THR-226; SER-229 AND SER-242</scope>
    <scope>IDENTIFICATION BY MASS SPECTROMETRY [LARGE SCALE ANALYSIS]</scope>
    <source>
        <tissue>Cervix carcinoma</tissue>
        <tissue>Erythroleukemia</tissue>
    </source>
</reference>
<reference key="30">
    <citation type="journal article" date="2014" name="J. Biol. Chem.">
        <title>The U4/U6 recycling factor SART3 has histone chaperone activity and associates with USP15 to regulate H2B deubiquitination.</title>
        <authorList>
            <person name="Long L."/>
            <person name="Thelen J.P."/>
            <person name="Furgason M."/>
            <person name="Haj-Yahya M."/>
            <person name="Brik A."/>
            <person name="Cheng D."/>
            <person name="Peng J."/>
            <person name="Yao T."/>
        </authorList>
    </citation>
    <scope>FUNCTION</scope>
    <scope>INTERACTION WITH RNF20; RNF40 AND SART3</scope>
    <scope>REGION</scope>
    <scope>SUBCELLULAR LOCATION</scope>
</reference>
<reference key="31">
    <citation type="journal article" date="2014" name="J. Proteomics">
        <title>An enzyme assisted RP-RPLC approach for in-depth analysis of human liver phosphoproteome.</title>
        <authorList>
            <person name="Bian Y."/>
            <person name="Song C."/>
            <person name="Cheng K."/>
            <person name="Dong M."/>
            <person name="Wang F."/>
            <person name="Huang J."/>
            <person name="Sun D."/>
            <person name="Wang L."/>
            <person name="Ye M."/>
            <person name="Zou H."/>
        </authorList>
    </citation>
    <scope>IDENTIFICATION BY MASS SPECTROMETRY [LARGE SCALE ANALYSIS]</scope>
    <source>
        <tissue>Liver</tissue>
    </source>
</reference>
<reference key="32">
    <citation type="journal article" date="2016" name="Cell">
        <title>An ER-associated pathway defines endosomal architecture for controlled cargo transport.</title>
        <authorList>
            <person name="Jongsma M.L."/>
            <person name="Berlin I."/>
            <person name="Wijdeven R.H."/>
            <person name="Janssen L."/>
            <person name="Janssen G.M."/>
            <person name="Garstka M.A."/>
            <person name="Janssen H."/>
            <person name="Mensink M."/>
            <person name="van Veelen P.A."/>
            <person name="Spaapen R.M."/>
            <person name="Neefjes J."/>
        </authorList>
    </citation>
    <scope>FUNCTION</scope>
    <scope>CATALYTIC ACTIVITY</scope>
    <scope>MUTAGENESIS OF CYS-298</scope>
</reference>
<reference key="33">
    <citation type="journal article" date="2014" name="Hum. Mol. Genet.">
        <title>The deubiquitinase USP15 antagonizes Parkin-mediated mitochondrial ubiquitination and mitophagy.</title>
        <authorList>
            <person name="Cornelissen T."/>
            <person name="Haddad D."/>
            <person name="Wauters F."/>
            <person name="Van Humbeeck C."/>
            <person name="Mandemakers W."/>
            <person name="Koentjoro B."/>
            <person name="Sue C."/>
            <person name="Gevaert K."/>
            <person name="De Strooper B."/>
            <person name="Verstreken P."/>
            <person name="Vandenberghe W."/>
        </authorList>
    </citation>
    <scope>FUNCTION</scope>
    <scope>CATALYTIC ACTIVITY</scope>
    <scope>INTERACTION WITH PRKN</scope>
    <scope>SUBCELLULAR LOCATION</scope>
    <scope>MUTAGENESIS OF CYS-298</scope>
</reference>
<reference key="34">
    <citation type="journal article" date="2020" name="Immunohorizons">
        <title>USP15 deubiquitinates CARD9 to downregulate C-type lectin receptor-mediated signaling.</title>
        <authorList>
            <person name="Xu W."/>
            <person name="Rush J.S."/>
            <person name="Graham D.B."/>
            <person name="Cao Z."/>
            <person name="Xavier R.J."/>
        </authorList>
    </citation>
    <scope>FUNCTION</scope>
    <scope>CATALYTIC ACTIVITY</scope>
    <scope>ACTIVE SITE</scope>
    <scope>MUTAGENESIS OF CYS-298</scope>
</reference>
<reference key="35">
    <citation type="journal article" date="2006" name="J. Biol. Chem.">
        <title>Solution structure of the human ubiquitin-specific protease 15 DUSP domain.</title>
        <authorList>
            <person name="de Jong R.N."/>
            <person name="Ab E."/>
            <person name="Diercks T."/>
            <person name="Truffault V."/>
            <person name="Danieels M."/>
            <person name="Kaptein R."/>
            <person name="Folkers G.E."/>
        </authorList>
    </citation>
    <scope>STRUCTURE BY NMR OF 1-120</scope>
</reference>
<reference key="36">
    <citation type="journal article" date="2011" name="Biochemistry">
        <title>Structure of the USP15 N-terminal domains: a beta-hairpin mediates close association between the DUSP and UBL domains.</title>
        <authorList>
            <person name="Harper S."/>
            <person name="Besong T.M."/>
            <person name="Emsley J."/>
            <person name="Scott D.J."/>
            <person name="Dreveny I."/>
        </authorList>
    </citation>
    <scope>X-RAY CRYSTALLOGRAPHY (1.5 ANGSTROMS) OF 1-222</scope>
</reference>
<reference key="37">
    <citation type="journal article" date="2011" name="FEBS Lett.">
        <title>Structural variability of the ubiquitin specific protease DUSP-UBL double domains.</title>
        <authorList>
            <person name="Elliott P.R."/>
            <person name="Liu H."/>
            <person name="Pastok M.W."/>
            <person name="Grossmann G.J."/>
            <person name="Rigden D.J."/>
            <person name="Clague M.J."/>
            <person name="Urbe S."/>
            <person name="Barsukov I.L."/>
        </authorList>
    </citation>
    <scope>X-RAY CRYSTALLOGRAPHY (2.6 ANGSTROMS) OF 1-223</scope>
</reference>
<reference key="38">
    <citation type="submission" date="2010-04" db="PDB data bank">
        <title>Crystal structure of the human ubiquitin-specific protease 15 DUSP domain.</title>
        <authorList>
            <consortium name="Structural genomics consortium (SGC)"/>
        </authorList>
    </citation>
    <scope>X-RAY CRYSTALLOGRAPHY (2.15 ANGSTROMS) OF 1-133</scope>
</reference>
<accession>Q9Y4E8</accession>
<accession>Q08AL5</accession>
<accession>Q9H8G9</accession>
<accession>Q9HCA6</accession>
<accession>Q9UNP0</accession>
<accession>Q9Y5B5</accession>
<gene>
    <name evidence="22 35" type="primary">USP15</name>
    <name evidence="25" type="synonym">KIAA0529</name>
</gene>
<proteinExistence type="evidence at protein level"/>
<feature type="initiator methionine" description="Removed" evidence="21 38 42 43">
    <location>
        <position position="1"/>
    </location>
</feature>
<feature type="chain" id="PRO_0000080641" description="Ubiquitin carboxyl-terminal hydrolase 15">
    <location>
        <begin position="2"/>
        <end position="981"/>
    </location>
</feature>
<feature type="domain" description="DUSP" evidence="2">
    <location>
        <begin position="7"/>
        <end position="118"/>
    </location>
</feature>
<feature type="domain" description="USP" evidence="3">
    <location>
        <begin position="289"/>
        <end position="933"/>
    </location>
</feature>
<feature type="region of interest" description="Mediates interaction with SART3" evidence="17">
    <location>
        <begin position="2"/>
        <end position="223"/>
    </location>
</feature>
<feature type="region of interest" description="Disordered" evidence="6">
    <location>
        <begin position="216"/>
        <end position="237"/>
    </location>
</feature>
<feature type="region of interest" description="Disordered" evidence="6">
    <location>
        <begin position="629"/>
        <end position="694"/>
    </location>
</feature>
<feature type="region of interest" description="Disordered" evidence="6">
    <location>
        <begin position="952"/>
        <end position="981"/>
    </location>
</feature>
<feature type="compositionally biased region" description="Polar residues" evidence="6">
    <location>
        <begin position="226"/>
        <end position="237"/>
    </location>
</feature>
<feature type="compositionally biased region" description="Acidic residues" evidence="6">
    <location>
        <begin position="656"/>
        <end position="673"/>
    </location>
</feature>
<feature type="compositionally biased region" description="Acidic residues" evidence="6">
    <location>
        <begin position="960"/>
        <end position="974"/>
    </location>
</feature>
<feature type="active site" description="Nucleophile" evidence="3 29 30 31 32 33 34">
    <location>
        <position position="298"/>
    </location>
</feature>
<feature type="active site" description="Proton acceptor" evidence="4 5">
    <location>
        <position position="891"/>
    </location>
</feature>
<feature type="modified residue" description="N-acetylalanine" evidence="21 38 42 43">
    <location>
        <position position="2"/>
    </location>
</feature>
<feature type="modified residue" description="Phosphothreonine" evidence="44">
    <location>
        <position position="226"/>
    </location>
</feature>
<feature type="modified residue" description="Phosphoserine" evidence="36 37 39 40 41 44">
    <location>
        <position position="229"/>
    </location>
</feature>
<feature type="modified residue" description="Phosphoserine" evidence="40 44">
    <location>
        <position position="242"/>
    </location>
</feature>
<feature type="modified residue" description="Phosphothreonine" evidence="1">
    <location>
        <position position="602"/>
    </location>
</feature>
<feature type="modified residue" description="Phosphoserine" evidence="37 40">
    <location>
        <position position="961"/>
    </location>
</feature>
<feature type="modified residue" description="Phosphoserine" evidence="37 40">
    <location>
        <position position="965"/>
    </location>
</feature>
<feature type="splice variant" id="VSP_005260" description="In isoform 3." evidence="27">
    <original>DGTWPRGPSTPKSPGASNFSTLPKISPSSLSNNYNNMNNR</original>
    <variation>QKNEDGTWPRGPSTP</variation>
    <location>
        <begin position="217"/>
        <end position="256"/>
    </location>
</feature>
<feature type="splice variant" id="VSP_005261" description="In isoform 2." evidence="24 25 26">
    <location>
        <begin position="228"/>
        <end position="256"/>
    </location>
</feature>
<feature type="splice variant" id="VSP_045165" description="In isoform 4." evidence="23 24">
    <original>SPGASNF</original>
    <variation>KPLEQSC</variation>
    <location>
        <begin position="229"/>
        <end position="235"/>
    </location>
</feature>
<feature type="splice variant" id="VSP_045166" description="In isoform 4." evidence="23 24">
    <location>
        <begin position="236"/>
        <end position="981"/>
    </location>
</feature>
<feature type="mutagenesis site" description="Loss of enzyme activity." evidence="10 14 16 18 19 20">
    <original>C</original>
    <variation>A</variation>
    <location>
        <position position="298"/>
    </location>
</feature>
<feature type="mutagenesis site" description="Loss of activity towards polyubiquitin." evidence="8 11">
    <original>C</original>
    <variation>A</variation>
    <location>
        <position position="812"/>
    </location>
</feature>
<feature type="sequence conflict" description="In Ref. 9; AAG28973." evidence="28" ref="9">
    <original>T</original>
    <variation>A</variation>
    <location>
        <position position="559"/>
    </location>
</feature>
<feature type="sequence conflict" description="In Ref. 7; AAI25124." evidence="28" ref="7">
    <original>S</original>
    <variation>F</variation>
    <location>
        <position position="747"/>
    </location>
</feature>
<feature type="sequence conflict" description="In Ref. 9; AAG28973." evidence="28" ref="9">
    <original>N</original>
    <variation>H</variation>
    <location>
        <position position="968"/>
    </location>
</feature>
<feature type="strand" evidence="45">
    <location>
        <begin position="4"/>
        <end position="6"/>
    </location>
</feature>
<feature type="helix" evidence="48">
    <location>
        <begin position="9"/>
        <end position="19"/>
    </location>
</feature>
<feature type="strand" evidence="48">
    <location>
        <begin position="29"/>
        <end position="34"/>
    </location>
</feature>
<feature type="helix" evidence="48">
    <location>
        <begin position="35"/>
        <end position="45"/>
    </location>
</feature>
<feature type="turn" evidence="46">
    <location>
        <begin position="46"/>
        <end position="48"/>
    </location>
</feature>
<feature type="turn" evidence="48">
    <location>
        <begin position="53"/>
        <end position="56"/>
    </location>
</feature>
<feature type="helix" evidence="48">
    <location>
        <begin position="58"/>
        <end position="60"/>
    </location>
</feature>
<feature type="helix" evidence="48">
    <location>
        <begin position="68"/>
        <end position="70"/>
    </location>
</feature>
<feature type="strand" evidence="46">
    <location>
        <begin position="73"/>
        <end position="76"/>
    </location>
</feature>
<feature type="turn" evidence="48">
    <location>
        <begin position="86"/>
        <end position="88"/>
    </location>
</feature>
<feature type="strand" evidence="48">
    <location>
        <begin position="89"/>
        <end position="93"/>
    </location>
</feature>
<feature type="helix" evidence="48">
    <location>
        <begin position="94"/>
        <end position="104"/>
    </location>
</feature>
<feature type="strand" evidence="48">
    <location>
        <begin position="114"/>
        <end position="120"/>
    </location>
</feature>
<feature type="strand" evidence="49">
    <location>
        <begin position="122"/>
        <end position="124"/>
    </location>
</feature>
<feature type="strand" evidence="48">
    <location>
        <begin position="127"/>
        <end position="129"/>
    </location>
</feature>
<feature type="strand" evidence="48">
    <location>
        <begin position="134"/>
        <end position="140"/>
    </location>
</feature>
<feature type="strand" evidence="48">
    <location>
        <begin position="143"/>
        <end position="152"/>
    </location>
</feature>
<feature type="helix" evidence="48">
    <location>
        <begin position="158"/>
        <end position="168"/>
    </location>
</feature>
<feature type="strand" evidence="47">
    <location>
        <begin position="173"/>
        <end position="175"/>
    </location>
</feature>
<feature type="strand" evidence="48">
    <location>
        <begin position="177"/>
        <end position="184"/>
    </location>
</feature>
<feature type="strand" evidence="48">
    <location>
        <begin position="187"/>
        <end position="190"/>
    </location>
</feature>
<feature type="helix" evidence="48">
    <location>
        <begin position="198"/>
        <end position="201"/>
    </location>
</feature>
<feature type="strand" evidence="48">
    <location>
        <begin position="208"/>
        <end position="213"/>
    </location>
</feature>
<feature type="helix" evidence="52">
    <location>
        <begin position="300"/>
        <end position="308"/>
    </location>
</feature>
<feature type="helix" evidence="52">
    <location>
        <begin position="311"/>
        <end position="318"/>
    </location>
</feature>
<feature type="turn" evidence="51">
    <location>
        <begin position="319"/>
        <end position="322"/>
    </location>
</feature>
<feature type="helix" evidence="52">
    <location>
        <begin position="323"/>
        <end position="325"/>
    </location>
</feature>
<feature type="helix" evidence="52">
    <location>
        <begin position="337"/>
        <end position="349"/>
    </location>
</feature>
<feature type="strand" evidence="52">
    <location>
        <begin position="351"/>
        <end position="353"/>
    </location>
</feature>
<feature type="strand" evidence="52">
    <location>
        <begin position="355"/>
        <end position="357"/>
    </location>
</feature>
<feature type="helix" evidence="52">
    <location>
        <begin position="360"/>
        <end position="369"/>
    </location>
</feature>
<feature type="helix" evidence="50">
    <location>
        <begin position="371"/>
        <end position="373"/>
    </location>
</feature>
<feature type="strand" evidence="53">
    <location>
        <begin position="374"/>
        <end position="377"/>
    </location>
</feature>
<feature type="helix" evidence="52">
    <location>
        <begin position="384"/>
        <end position="395"/>
    </location>
</feature>
<feature type="helix" evidence="52">
    <location>
        <begin position="415"/>
        <end position="429"/>
    </location>
</feature>
<feature type="helix" evidence="52">
    <location>
        <begin position="433"/>
        <end position="438"/>
    </location>
</feature>
<feature type="strand" evidence="52">
    <location>
        <begin position="440"/>
        <end position="447"/>
    </location>
</feature>
<feature type="turn" evidence="52">
    <location>
        <begin position="449"/>
        <end position="451"/>
    </location>
</feature>
<feature type="strand" evidence="52">
    <location>
        <begin position="454"/>
        <end position="466"/>
    </location>
</feature>
<feature type="strand" evidence="52">
    <location>
        <begin position="784"/>
        <end position="787"/>
    </location>
</feature>
<feature type="helix" evidence="52">
    <location>
        <begin position="788"/>
        <end position="795"/>
    </location>
</feature>
<feature type="strand" evidence="53">
    <location>
        <begin position="803"/>
        <end position="805"/>
    </location>
</feature>
<feature type="strand" evidence="52">
    <location>
        <begin position="807"/>
        <end position="809"/>
    </location>
</feature>
<feature type="turn" evidence="52">
    <location>
        <begin position="810"/>
        <end position="813"/>
    </location>
</feature>
<feature type="strand" evidence="52">
    <location>
        <begin position="814"/>
        <end position="816"/>
    </location>
</feature>
<feature type="strand" evidence="52">
    <location>
        <begin position="819"/>
        <end position="827"/>
    </location>
</feature>
<feature type="strand" evidence="52">
    <location>
        <begin position="829"/>
        <end position="835"/>
    </location>
</feature>
<feature type="strand" evidence="50">
    <location>
        <begin position="838"/>
        <end position="840"/>
    </location>
</feature>
<feature type="helix" evidence="52">
    <location>
        <begin position="841"/>
        <end position="843"/>
    </location>
</feature>
<feature type="strand" evidence="50">
    <location>
        <begin position="845"/>
        <end position="847"/>
    </location>
</feature>
<feature type="strand" evidence="52">
    <location>
        <begin position="851"/>
        <end position="853"/>
    </location>
</feature>
<feature type="strand" evidence="52">
    <location>
        <begin position="859"/>
        <end position="861"/>
    </location>
</feature>
<feature type="helix" evidence="51">
    <location>
        <begin position="862"/>
        <end position="864"/>
    </location>
</feature>
<feature type="strand" evidence="52">
    <location>
        <begin position="873"/>
        <end position="884"/>
    </location>
</feature>
<feature type="strand" evidence="52">
    <location>
        <begin position="891"/>
        <end position="897"/>
    </location>
</feature>
<feature type="turn" evidence="52">
    <location>
        <begin position="899"/>
        <end position="901"/>
    </location>
</feature>
<feature type="strand" evidence="52">
    <location>
        <begin position="904"/>
        <end position="908"/>
    </location>
</feature>
<feature type="strand" evidence="52">
    <location>
        <begin position="911"/>
        <end position="914"/>
    </location>
</feature>
<feature type="helix" evidence="52">
    <location>
        <begin position="917"/>
        <end position="919"/>
    </location>
</feature>
<feature type="strand" evidence="52">
    <location>
        <begin position="925"/>
        <end position="932"/>
    </location>
</feature>
<feature type="helix" evidence="51">
    <location>
        <begin position="933"/>
        <end position="935"/>
    </location>
</feature>
<feature type="helix" evidence="53">
    <location>
        <begin position="943"/>
        <end position="948"/>
    </location>
</feature>
<protein>
    <recommendedName>
        <fullName evidence="28">Ubiquitin carboxyl-terminal hydrolase 15</fullName>
        <ecNumber evidence="7 8 14 16 18 19 20">3.4.19.12</ecNumber>
    </recommendedName>
    <alternativeName>
        <fullName evidence="22">Deubiquitinating enzyme 15</fullName>
    </alternativeName>
    <alternativeName>
        <fullName evidence="22">Ubiquitin thioesterase 15</fullName>
    </alternativeName>
    <alternativeName>
        <fullName evidence="22">Ubiquitin-specific-processing protease 15</fullName>
    </alternativeName>
    <alternativeName>
        <fullName evidence="27">Unph-2</fullName>
    </alternativeName>
    <alternativeName>
        <fullName evidence="26">Unph4</fullName>
    </alternativeName>
</protein>
<comment type="function">
    <text evidence="8 9 11 12 14 16 17 18 19 20">Hydrolase that removes conjugated ubiquitin from target proteins and regulates various pathways such as the TGF-beta receptor signaling, NF-kappa-B and RNF41/NRDP1-PRKN pathways (PubMed:16005295, PubMed:17318178, PubMed:19576224, PubMed:19826004, PubMed:21947082, PubMed:22344298, PubMed:24852371). Acts as a key regulator of TGF-beta receptor signaling pathway, but the precise mechanism is still unclear: according to a report, acts by promoting deubiquitination of monoubiquitinated R-SMADs (SMAD1, SMAD2 and/or SMAD3), thereby alleviating inhibition of R-SMADs and promoting activation of TGF-beta target genes (PubMed:21947082). According to another reports, regulates the TGF-beta receptor signaling pathway by mediating deubiquitination and stabilization of TGFBR1, leading to an enhanced TGF-beta signal (PubMed:22344298). Able to mediate deubiquitination of monoubiquitinated substrates, 'Lys-27'-, 'Lys-48'- and 'Lys-63'-linked polyubiquitin chains (PubMed:33093067). May also regulate gene expression and/or DNA repair through the deubiquitination of histone H2B (PubMed:24526689). Acts as an inhibitor of mitophagy by counteracting the action of parkin (PRKN): hydrolyzes cleavage of 'Lys-48'- and 'Lys-63'-linked polyubiquitin chains attached by parkin on target proteins such as MFN2, thereby reducing parkin's ability to drive mitophagy (PubMed:24852371). Acts as an associated component of COP9 signalosome complex (CSN) and regulates different pathways via this association: regulates NF-kappa-B by mediating deubiquitination of NFKBIA and deubiquitinates substrates bound to VCP (PubMed:16005295, PubMed:17318178, PubMed:19576224, PubMed:19826004). Involved in endosome organization by mediating deubiquitination of SQSTM1: ubiquitinated SQSTM1 forms a molecular bridge that restrains cognate vesicles in the perinuclear region and its deubiquitination releases target vesicles for fast transport into the cell periphery (PubMed:27368102). Acts as a negative regulator of antifungal immunity by mediating 'Lys-27'-linked deubiquitination of CARD9, thereby inactivating CARD9 (PubMed:33093067).</text>
</comment>
<comment type="function">
    <text evidence="10">(Microbial infection) Protects APC and human papillomavirus type 16 protein E6 against degradation via the ubiquitin proteasome pathway.</text>
</comment>
<comment type="catalytic activity">
    <reaction evidence="7 8 14 16 19 20">
        <text>Thiol-dependent hydrolysis of ester, thioester, amide, peptide and isopeptide bonds formed by the C-terminal Gly of ubiquitin (a 76-residue protein attached to proteins as an intracellular targeting signal).</text>
        <dbReference type="EC" id="3.4.19.12"/>
    </reaction>
</comment>
<comment type="subunit">
    <text evidence="8 13 14 15 16 17 18">A homodimer structure has been reported; however it is unclear whether the protein form a homodimer in vivo (PubMed:22001210). Identified in a complex with the COP9 signalosome complex (CSN) (PubMed:16005295). Interacts with SMAD1, SMAD2 and SMAD3; the interaction is direct (PubMed:21947082). Forms a complex with SMURF2 and SMAD7 (PubMed:22344298). Interacts with TGFBR1 (PubMed:22344298). Interacts with SART3; the interaction is direct (PubMed:24526689). May interact with RNF20 and RNF40 (PubMed:24526689). May interact with PRKN (PubMed:24852371). Interacts with INCA1 (PubMed:21750715).</text>
</comment>
<comment type="subunit">
    <text evidence="10">(Microbial infection) Interacts with human papillomavirus type 16 protein E6.</text>
</comment>
<comment type="interaction">
    <interactant intactId="EBI-1043104">
        <id>Q9Y4E8</id>
    </interactant>
    <interactant intactId="EBI-751319">
        <id>Q9H257</id>
        <label>CARD9</label>
    </interactant>
    <organismsDiffer>false</organismsDiffer>
    <experiments>4</experiments>
</comment>
<comment type="interaction">
    <interactant intactId="EBI-1043104">
        <id>Q9Y4E8</id>
    </interactant>
    <interactant intactId="EBI-2808286">
        <id>Q2TAC2</id>
        <label>CCDC57</label>
    </interactant>
    <organismsDiffer>false</organismsDiffer>
    <experiments>3</experiments>
</comment>
<comment type="interaction">
    <interactant intactId="EBI-1043104">
        <id>Q9Y4E8</id>
    </interactant>
    <interactant intactId="EBI-6509505">
        <id>Q0VD86</id>
        <label>INCA1</label>
    </interactant>
    <organismsDiffer>false</organismsDiffer>
    <experiments>2</experiments>
</comment>
<comment type="interaction">
    <interactant intactId="EBI-1043104">
        <id>Q9Y4E8</id>
    </interactant>
    <interactant intactId="EBI-742610">
        <id>Q9Y6D9</id>
        <label>MAD1L1</label>
    </interactant>
    <organismsDiffer>false</organismsDiffer>
    <experiments>3</experiments>
</comment>
<comment type="interaction">
    <interactant intactId="EBI-1043104">
        <id>Q9Y4E8</id>
    </interactant>
    <interactant intactId="EBI-715381">
        <id>Q96EA4</id>
        <label>SPDL1</label>
    </interactant>
    <organismsDiffer>false</organismsDiffer>
    <experiments>4</experiments>
</comment>
<comment type="interaction">
    <interactant intactId="EBI-1043104">
        <id>Q9Y4E8</id>
    </interactant>
    <interactant intactId="EBI-947849">
        <id>Q86TM6</id>
        <label>SYVN1</label>
    </interactant>
    <organismsDiffer>false</organismsDiffer>
    <experiments>8</experiments>
</comment>
<comment type="interaction">
    <interactant intactId="EBI-1043104">
        <id>Q9Y4E8</id>
    </interactant>
    <interactant intactId="EBI-26453465">
        <id>Q6ZNK6</id>
        <label>TIFAB</label>
    </interactant>
    <organismsDiffer>false</organismsDiffer>
    <experiments>5</experiments>
</comment>
<comment type="interaction">
    <interactant intactId="EBI-1043104">
        <id>Q9Y4E8</id>
    </interactant>
    <interactant intactId="EBI-81290">
        <id>P19474</id>
        <label>TRIM21</label>
    </interactant>
    <organismsDiffer>false</organismsDiffer>
    <experiments>3</experiments>
</comment>
<comment type="interaction">
    <interactant intactId="EBI-1043104">
        <id>Q9Y4E8</id>
    </interactant>
    <interactant intactId="EBI-714589">
        <id>Q9BTM9</id>
        <label>URM1</label>
    </interactant>
    <organismsDiffer>false</organismsDiffer>
    <experiments>2</experiments>
</comment>
<comment type="interaction">
    <interactant intactId="EBI-1043104">
        <id>Q9Y4E8</id>
    </interactant>
    <interactant intactId="EBI-1043104">
        <id>Q9Y4E8</id>
        <label>USP15</label>
    </interactant>
    <organismsDiffer>false</organismsDiffer>
    <experiments>5</experiments>
</comment>
<comment type="interaction">
    <interactant intactId="EBI-12041225">
        <id>Q9Y4E8-2</id>
    </interactant>
    <interactant intactId="EBI-10976677">
        <id>G5E9A7</id>
        <label>DMWD</label>
    </interactant>
    <organismsDiffer>false</organismsDiffer>
    <experiments>3</experiments>
</comment>
<comment type="interaction">
    <interactant intactId="EBI-12041225">
        <id>Q9Y4E8-2</id>
    </interactant>
    <interactant intactId="EBI-356700">
        <id>P57678</id>
        <label>GEMIN4</label>
    </interactant>
    <organismsDiffer>false</organismsDiffer>
    <experiments>3</experiments>
</comment>
<comment type="interaction">
    <interactant intactId="EBI-12041225">
        <id>Q9Y4E8-2</id>
    </interactant>
    <interactant intactId="EBI-618309">
        <id>Q08379</id>
        <label>GOLGA2</label>
    </interactant>
    <organismsDiffer>false</organismsDiffer>
    <experiments>3</experiments>
</comment>
<comment type="interaction">
    <interactant intactId="EBI-12041225">
        <id>Q9Y4E8-2</id>
    </interactant>
    <interactant intactId="EBI-11163335">
        <id>Q9NYA3</id>
        <label>GOLGA6A</label>
    </interactant>
    <organismsDiffer>false</organismsDiffer>
    <experiments>3</experiments>
</comment>
<comment type="interaction">
    <interactant intactId="EBI-12041225">
        <id>Q9Y4E8-2</id>
    </interactant>
    <interactant intactId="EBI-351935">
        <id>P02545</id>
        <label>LMNA</label>
    </interactant>
    <organismsDiffer>false</organismsDiffer>
    <experiments>3</experiments>
</comment>
<comment type="interaction">
    <interactant intactId="EBI-12041225">
        <id>Q9Y4E8-2</id>
    </interactant>
    <interactant intactId="EBI-742610">
        <id>Q9Y6D9</id>
        <label>MAD1L1</label>
    </interactant>
    <organismsDiffer>false</organismsDiffer>
    <experiments>3</experiments>
</comment>
<comment type="interaction">
    <interactant intactId="EBI-12041225">
        <id>Q9Y4E8-2</id>
    </interactant>
    <interactant intactId="EBI-14066006">
        <id>Q4G0R1</id>
        <label>PIBF1</label>
    </interactant>
    <organismsDiffer>false</organismsDiffer>
    <experiments>3</experiments>
</comment>
<comment type="interaction">
    <interactant intactId="EBI-12041225">
        <id>Q9Y4E8-2</id>
    </interactant>
    <interactant intactId="EBI-5235340">
        <id>Q7Z699</id>
        <label>SPRED1</label>
    </interactant>
    <organismsDiffer>false</organismsDiffer>
    <experiments>3</experiments>
</comment>
<comment type="interaction">
    <interactant intactId="EBI-12041225">
        <id>Q9Y4E8-2</id>
    </interactant>
    <interactant intactId="EBI-11523345">
        <id>Q8IYF3-3</id>
        <label>TEX11</label>
    </interactant>
    <organismsDiffer>false</organismsDiffer>
    <experiments>3</experiments>
</comment>
<comment type="subcellular location">
    <subcellularLocation>
        <location evidence="14 17">Cytoplasm</location>
    </subcellularLocation>
    <subcellularLocation>
        <location evidence="14 17">Nucleus</location>
    </subcellularLocation>
    <subcellularLocation>
        <location evidence="18">Mitochondrion</location>
    </subcellularLocation>
</comment>
<comment type="alternative products">
    <event type="alternative splicing"/>
    <isoform>
        <id>Q9Y4E8-1</id>
        <name>1</name>
        <sequence type="displayed"/>
    </isoform>
    <isoform>
        <id>Q9Y4E8-2</id>
        <name>2</name>
        <sequence type="described" ref="VSP_005261"/>
    </isoform>
    <isoform>
        <id>Q9Y4E8-3</id>
        <name>3</name>
        <sequence type="described" ref="VSP_005260"/>
    </isoform>
    <isoform>
        <id>Q9Y4E8-4</id>
        <name>4</name>
        <sequence type="described" ref="VSP_045165 VSP_045166"/>
    </isoform>
</comment>
<comment type="tissue specificity">
    <text>Expressed in skeletal muscle, kidney, heart, placenta, liver, thymus, lung, and ovary, with little or no expression in other tissues.</text>
</comment>
<comment type="PTM">
    <text evidence="8">Phosphorylated. Phosphorylation protects against ubiquitination and subsequent degradation by the proteasome.</text>
</comment>
<comment type="PTM">
    <text evidence="8">Ubiquitinated, leading to degradation by the proteasome.</text>
</comment>
<comment type="similarity">
    <text evidence="28">Belongs to the peptidase C19 family.</text>
</comment>
<comment type="online information" name="Atlas of Genetics and Cytogenetics in Oncology and Haematology">
    <link uri="https://atlasgeneticsoncology.org/gene/44585/USP15"/>
</comment>